<name>PSAB_OSTTA</name>
<sequence length="733" mass="81346">MATKFPKFSQGLASDPTTRRIWFGIATAHDFETHDGMTEEKLYQKIFASHFGQLAIIFLWTSGNLFHVAWQGNFEKWGEDPLHVRPIAHTIWDPHFGQPAVEAFTRGGASAPVNIAYSGVYQWWYTIGMRTNVDLYNGSLFLLFVAGLFLFAGWLHLQPTFAPAVSWFKNAESRLNHHLSGLFGVSSLAWTGHLVHVAIPASRGETVRWDNFLTTLPHPAGLAPFFTGQWAVYAQNPDTAGHIFGTSEGAGTAILTFLGGFHPQTQSLWLTDMAHHHLAIAVVFIIAGHQYRTNFGIGHSMKEILEAHTAPSGRLGAGHTGLFDTVNNSLHFQLGLALASVGVLCSLTAQHMYSMPPYAFLAQDFTTQAALYSHHQYIAGFIMCGAFAHGAIFFIRDYDPEANKGNVLARMLEHKEAIISHLSWVSLFLGFHTLGLYVHNDVMQAFGTPEKQILIEPVFAQWIQAAQGKALYGFDILLSGDNAATAAGNSIYLPGWLAGINSSTNSLFLPIGPGDFLVHHAIALGLHTTTLILVKGALDARGSKLMPDKKDFGYSFPCDGPGRGGTCDISAWDAFYLAVFWELNTVSWTVFYFHWKHLALWQGNSAQFDESSTYIMGWLRDYLWLNSSQLINGYNPFGMNSLSVWAWMFLFGHLIYATGFMFLISWRGYWQELIETLVWAHERTPLANFVKWNDKPVALSIVQARLVGLTHFAVGFVLTYAAFVIASTSGKFG</sequence>
<keyword id="KW-0002">3D-structure</keyword>
<keyword id="KW-0004">4Fe-4S</keyword>
<keyword id="KW-0148">Chlorophyll</keyword>
<keyword id="KW-0150">Chloroplast</keyword>
<keyword id="KW-0157">Chromophore</keyword>
<keyword id="KW-0249">Electron transport</keyword>
<keyword id="KW-0408">Iron</keyword>
<keyword id="KW-0411">Iron-sulfur</keyword>
<keyword id="KW-0460">Magnesium</keyword>
<keyword id="KW-0472">Membrane</keyword>
<keyword id="KW-0479">Metal-binding</keyword>
<keyword id="KW-0560">Oxidoreductase</keyword>
<keyword id="KW-0602">Photosynthesis</keyword>
<keyword id="KW-0603">Photosystem I</keyword>
<keyword id="KW-0934">Plastid</keyword>
<keyword id="KW-1185">Reference proteome</keyword>
<keyword id="KW-0793">Thylakoid</keyword>
<keyword id="KW-0812">Transmembrane</keyword>
<keyword id="KW-1133">Transmembrane helix</keyword>
<keyword id="KW-0813">Transport</keyword>
<accession>Q0P3K2</accession>
<gene>
    <name evidence="1" type="primary">psaB</name>
    <name type="ordered locus">OtCpg00500</name>
</gene>
<reference key="1">
    <citation type="journal article" date="2007" name="Mol. Biol. Evol.">
        <title>The complete chloroplast and mitochondrial DNA sequence of Ostreococcus tauri: organelle genomes of the smallest eukaryote are examples of compaction.</title>
        <authorList>
            <person name="Robbens S."/>
            <person name="Derelle E."/>
            <person name="Ferraz C."/>
            <person name="Wuyts J."/>
            <person name="Moreau H."/>
            <person name="Van de Peer Y."/>
        </authorList>
    </citation>
    <scope>NUCLEOTIDE SEQUENCE [LARGE SCALE GENOMIC DNA]</scope>
    <source>
        <strain>OTTH0595</strain>
    </source>
</reference>
<evidence type="ECO:0000255" key="1">
    <source>
        <dbReference type="HAMAP-Rule" id="MF_00482"/>
    </source>
</evidence>
<evidence type="ECO:0007829" key="2">
    <source>
        <dbReference type="PDB" id="7YCA"/>
    </source>
</evidence>
<geneLocation type="chloroplast"/>
<dbReference type="EC" id="1.97.1.12" evidence="1"/>
<dbReference type="EMBL" id="CR954199">
    <property type="protein sequence ID" value="CAL36375.1"/>
    <property type="molecule type" value="Genomic_DNA"/>
</dbReference>
<dbReference type="RefSeq" id="YP_717253.1">
    <property type="nucleotide sequence ID" value="NC_008289.1"/>
</dbReference>
<dbReference type="PDB" id="7YCA">
    <property type="method" value="EM"/>
    <property type="resolution" value="2.94 A"/>
    <property type="chains" value="B=1-733"/>
</dbReference>
<dbReference type="PDBsum" id="7YCA"/>
<dbReference type="EMDB" id="EMD-33737"/>
<dbReference type="SMR" id="Q0P3K2"/>
<dbReference type="FunCoup" id="Q0P3K2">
    <property type="interactions" value="179"/>
</dbReference>
<dbReference type="STRING" id="70448.Q0P3K2"/>
<dbReference type="GeneID" id="4238874"/>
<dbReference type="KEGG" id="ota:OstapCp50"/>
<dbReference type="eggNOG" id="ENOG502QRYE">
    <property type="taxonomic scope" value="Eukaryota"/>
</dbReference>
<dbReference type="InParanoid" id="Q0P3K2"/>
<dbReference type="Proteomes" id="UP000009170">
    <property type="component" value="Chloroplast"/>
</dbReference>
<dbReference type="GO" id="GO:0009535">
    <property type="term" value="C:chloroplast thylakoid membrane"/>
    <property type="evidence" value="ECO:0007669"/>
    <property type="project" value="UniProtKB-SubCell"/>
</dbReference>
<dbReference type="GO" id="GO:0009522">
    <property type="term" value="C:photosystem I"/>
    <property type="evidence" value="ECO:0007669"/>
    <property type="project" value="UniProtKB-KW"/>
</dbReference>
<dbReference type="GO" id="GO:0051539">
    <property type="term" value="F:4 iron, 4 sulfur cluster binding"/>
    <property type="evidence" value="ECO:0007669"/>
    <property type="project" value="UniProtKB-KW"/>
</dbReference>
<dbReference type="GO" id="GO:0016168">
    <property type="term" value="F:chlorophyll binding"/>
    <property type="evidence" value="ECO:0007669"/>
    <property type="project" value="UniProtKB-KW"/>
</dbReference>
<dbReference type="GO" id="GO:0009055">
    <property type="term" value="F:electron transfer activity"/>
    <property type="evidence" value="ECO:0007669"/>
    <property type="project" value="UniProtKB-UniRule"/>
</dbReference>
<dbReference type="GO" id="GO:0000287">
    <property type="term" value="F:magnesium ion binding"/>
    <property type="evidence" value="ECO:0007669"/>
    <property type="project" value="UniProtKB-UniRule"/>
</dbReference>
<dbReference type="GO" id="GO:0016491">
    <property type="term" value="F:oxidoreductase activity"/>
    <property type="evidence" value="ECO:0007669"/>
    <property type="project" value="UniProtKB-KW"/>
</dbReference>
<dbReference type="GO" id="GO:0015979">
    <property type="term" value="P:photosynthesis"/>
    <property type="evidence" value="ECO:0007669"/>
    <property type="project" value="UniProtKB-UniRule"/>
</dbReference>
<dbReference type="FunFam" id="1.20.1130.10:FF:000001">
    <property type="entry name" value="Photosystem I P700 chlorophyll a apoprotein A2"/>
    <property type="match status" value="1"/>
</dbReference>
<dbReference type="Gene3D" id="1.20.1130.10">
    <property type="entry name" value="Photosystem I PsaA/PsaB"/>
    <property type="match status" value="1"/>
</dbReference>
<dbReference type="HAMAP" id="MF_00482">
    <property type="entry name" value="PSI_PsaB"/>
    <property type="match status" value="1"/>
</dbReference>
<dbReference type="InterPro" id="IPR001280">
    <property type="entry name" value="PSI_PsaA/B"/>
</dbReference>
<dbReference type="InterPro" id="IPR020586">
    <property type="entry name" value="PSI_PsaA/B_CS"/>
</dbReference>
<dbReference type="InterPro" id="IPR036408">
    <property type="entry name" value="PSI_PsaA/B_sf"/>
</dbReference>
<dbReference type="InterPro" id="IPR006244">
    <property type="entry name" value="PSI_PsaB"/>
</dbReference>
<dbReference type="NCBIfam" id="TIGR01336">
    <property type="entry name" value="psaB"/>
    <property type="match status" value="1"/>
</dbReference>
<dbReference type="PANTHER" id="PTHR30128">
    <property type="entry name" value="OUTER MEMBRANE PROTEIN, OMPA-RELATED"/>
    <property type="match status" value="1"/>
</dbReference>
<dbReference type="PANTHER" id="PTHR30128:SF19">
    <property type="entry name" value="PHOTOSYSTEM I P700 CHLOROPHYLL A APOPROTEIN A1-RELATED"/>
    <property type="match status" value="1"/>
</dbReference>
<dbReference type="Pfam" id="PF00223">
    <property type="entry name" value="PsaA_PsaB"/>
    <property type="match status" value="1"/>
</dbReference>
<dbReference type="PIRSF" id="PIRSF002905">
    <property type="entry name" value="PSI_A"/>
    <property type="match status" value="1"/>
</dbReference>
<dbReference type="PRINTS" id="PR00257">
    <property type="entry name" value="PHOTSYSPSAAB"/>
</dbReference>
<dbReference type="SUPFAM" id="SSF81558">
    <property type="entry name" value="Photosystem I subunits PsaA/PsaB"/>
    <property type="match status" value="1"/>
</dbReference>
<dbReference type="PROSITE" id="PS00419">
    <property type="entry name" value="PHOTOSYSTEM_I_PSAAB"/>
    <property type="match status" value="1"/>
</dbReference>
<organism>
    <name type="scientific">Ostreococcus tauri</name>
    <dbReference type="NCBI Taxonomy" id="70448"/>
    <lineage>
        <taxon>Eukaryota</taxon>
        <taxon>Viridiplantae</taxon>
        <taxon>Chlorophyta</taxon>
        <taxon>Mamiellophyceae</taxon>
        <taxon>Mamiellales</taxon>
        <taxon>Bathycoccaceae</taxon>
        <taxon>Ostreococcus</taxon>
    </lineage>
</organism>
<comment type="function">
    <text evidence="1">PsaA and PsaB bind P700, the primary electron donor of photosystem I (PSI), as well as the electron acceptors A0, A1 and FX. PSI is a plastocyanin/cytochrome c6-ferredoxin oxidoreductase, converting photonic excitation into a charge separation, which transfers an electron from the donor P700 chlorophyll pair to the spectroscopically characterized acceptors A0, A1, FX, FA and FB in turn. Oxidized P700 is reduced on the lumenal side of the thylakoid membrane by plastocyanin or cytochrome c6.</text>
</comment>
<comment type="catalytic activity">
    <reaction evidence="1">
        <text>reduced [plastocyanin] + hnu + oxidized [2Fe-2S]-[ferredoxin] = oxidized [plastocyanin] + reduced [2Fe-2S]-[ferredoxin]</text>
        <dbReference type="Rhea" id="RHEA:30407"/>
        <dbReference type="Rhea" id="RHEA-COMP:10000"/>
        <dbReference type="Rhea" id="RHEA-COMP:10001"/>
        <dbReference type="Rhea" id="RHEA-COMP:10039"/>
        <dbReference type="Rhea" id="RHEA-COMP:10040"/>
        <dbReference type="ChEBI" id="CHEBI:29036"/>
        <dbReference type="ChEBI" id="CHEBI:30212"/>
        <dbReference type="ChEBI" id="CHEBI:33737"/>
        <dbReference type="ChEBI" id="CHEBI:33738"/>
        <dbReference type="ChEBI" id="CHEBI:49552"/>
        <dbReference type="EC" id="1.97.1.12"/>
    </reaction>
</comment>
<comment type="cofactor">
    <text evidence="1">P700 is a chlorophyll a/chlorophyll a' dimer, A0 is one or more chlorophyll a, A1 is one or both phylloquinones and FX is a shared 4Fe-4S iron-sulfur center.</text>
</comment>
<comment type="subunit">
    <text evidence="1">The PsaA/B heterodimer binds the P700 chlorophyll special pair and subsequent electron acceptors. PSI consists of a core antenna complex that captures photons, and an electron transfer chain that converts photonic excitation into a charge separation. The eukaryotic PSI reaction center is composed of at least 11 subunits.</text>
</comment>
<comment type="subcellular location">
    <subcellularLocation>
        <location>Plastid</location>
        <location>Chloroplast thylakoid membrane</location>
        <topology>Multi-pass membrane protein</topology>
    </subcellularLocation>
</comment>
<comment type="similarity">
    <text evidence="1">Belongs to the PsaA/PsaB family.</text>
</comment>
<proteinExistence type="evidence at protein level"/>
<protein>
    <recommendedName>
        <fullName evidence="1">Photosystem I P700 chlorophyll a apoprotein A2</fullName>
        <ecNumber evidence="1">1.97.1.12</ecNumber>
    </recommendedName>
    <alternativeName>
        <fullName evidence="1">PSI-B</fullName>
    </alternativeName>
    <alternativeName>
        <fullName evidence="1">PsaB</fullName>
    </alternativeName>
</protein>
<feature type="chain" id="PRO_0000277125" description="Photosystem I P700 chlorophyll a apoprotein A2">
    <location>
        <begin position="1"/>
        <end position="733"/>
    </location>
</feature>
<feature type="transmembrane region" description="Helical; Name=I" evidence="1">
    <location>
        <begin position="46"/>
        <end position="69"/>
    </location>
</feature>
<feature type="transmembrane region" description="Helical; Name=II" evidence="1">
    <location>
        <begin position="135"/>
        <end position="158"/>
    </location>
</feature>
<feature type="transmembrane region" description="Helical; Name=III" evidence="1">
    <location>
        <begin position="175"/>
        <end position="199"/>
    </location>
</feature>
<feature type="transmembrane region" description="Helical; Name=IV" evidence="1">
    <location>
        <begin position="273"/>
        <end position="291"/>
    </location>
</feature>
<feature type="transmembrane region" description="Helical; Name=V" evidence="1">
    <location>
        <begin position="330"/>
        <end position="353"/>
    </location>
</feature>
<feature type="transmembrane region" description="Helical; Name=VI" evidence="1">
    <location>
        <begin position="369"/>
        <end position="395"/>
    </location>
</feature>
<feature type="transmembrane region" description="Helical; Name=VII" evidence="1">
    <location>
        <begin position="417"/>
        <end position="439"/>
    </location>
</feature>
<feature type="transmembrane region" description="Helical; Name=VIII" evidence="1">
    <location>
        <begin position="516"/>
        <end position="534"/>
    </location>
</feature>
<feature type="transmembrane region" description="Helical; Name=IX" evidence="1">
    <location>
        <begin position="574"/>
        <end position="595"/>
    </location>
</feature>
<feature type="transmembrane region" description="Helical; Name=X" evidence="1">
    <location>
        <begin position="642"/>
        <end position="664"/>
    </location>
</feature>
<feature type="transmembrane region" description="Helical; Name=XI" evidence="1">
    <location>
        <begin position="706"/>
        <end position="726"/>
    </location>
</feature>
<feature type="binding site" evidence="1">
    <location>
        <position position="558"/>
    </location>
    <ligand>
        <name>[4Fe-4S] cluster</name>
        <dbReference type="ChEBI" id="CHEBI:49883"/>
        <note>ligand shared between dimeric partners</note>
    </ligand>
</feature>
<feature type="binding site" evidence="1">
    <location>
        <position position="567"/>
    </location>
    <ligand>
        <name>[4Fe-4S] cluster</name>
        <dbReference type="ChEBI" id="CHEBI:49883"/>
        <note>ligand shared between dimeric partners</note>
    </ligand>
</feature>
<feature type="binding site" description="axial binding residue" evidence="1">
    <location>
        <position position="653"/>
    </location>
    <ligand>
        <name>chlorophyll a</name>
        <dbReference type="ChEBI" id="CHEBI:58416"/>
        <label>B1</label>
    </ligand>
    <ligandPart>
        <name>Mg</name>
        <dbReference type="ChEBI" id="CHEBI:25107"/>
    </ligandPart>
</feature>
<feature type="binding site" description="axial binding residue" evidence="1">
    <location>
        <position position="661"/>
    </location>
    <ligand>
        <name>chlorophyll a</name>
        <dbReference type="ChEBI" id="CHEBI:58416"/>
        <label>B3</label>
    </ligand>
    <ligandPart>
        <name>Mg</name>
        <dbReference type="ChEBI" id="CHEBI:25107"/>
    </ligandPart>
</feature>
<feature type="binding site" evidence="1">
    <location>
        <position position="669"/>
    </location>
    <ligand>
        <name>chlorophyll a</name>
        <dbReference type="ChEBI" id="CHEBI:58416"/>
        <label>B3</label>
    </ligand>
</feature>
<feature type="binding site" evidence="1">
    <location>
        <position position="670"/>
    </location>
    <ligand>
        <name>phylloquinone</name>
        <dbReference type="ChEBI" id="CHEBI:18067"/>
        <label>B</label>
    </ligand>
</feature>
<feature type="strand" evidence="2">
    <location>
        <begin position="3"/>
        <end position="5"/>
    </location>
</feature>
<feature type="helix" evidence="2">
    <location>
        <begin position="10"/>
        <end position="13"/>
    </location>
</feature>
<feature type="helix" evidence="2">
    <location>
        <begin position="19"/>
        <end position="26"/>
    </location>
</feature>
<feature type="helix" evidence="2">
    <location>
        <begin position="31"/>
        <end position="33"/>
    </location>
</feature>
<feature type="helix" evidence="2">
    <location>
        <begin position="39"/>
        <end position="71"/>
    </location>
</feature>
<feature type="helix" evidence="2">
    <location>
        <begin position="74"/>
        <end position="79"/>
    </location>
</feature>
<feature type="turn" evidence="2">
    <location>
        <begin position="81"/>
        <end position="83"/>
    </location>
</feature>
<feature type="helix" evidence="2">
    <location>
        <begin position="98"/>
        <end position="103"/>
    </location>
</feature>
<feature type="helix" evidence="2">
    <location>
        <begin position="120"/>
        <end position="126"/>
    </location>
</feature>
<feature type="helix" evidence="2">
    <location>
        <begin position="132"/>
        <end position="155"/>
    </location>
</feature>
<feature type="turn" evidence="2">
    <location>
        <begin position="159"/>
        <end position="161"/>
    </location>
</feature>
<feature type="helix" evidence="2">
    <location>
        <begin position="165"/>
        <end position="169"/>
    </location>
</feature>
<feature type="helix" evidence="2">
    <location>
        <begin position="171"/>
        <end position="180"/>
    </location>
</feature>
<feature type="turn" evidence="2">
    <location>
        <begin position="181"/>
        <end position="183"/>
    </location>
</feature>
<feature type="helix" evidence="2">
    <location>
        <begin position="184"/>
        <end position="196"/>
    </location>
</feature>
<feature type="helix" evidence="2">
    <location>
        <begin position="198"/>
        <end position="202"/>
    </location>
</feature>
<feature type="turn" evidence="2">
    <location>
        <begin position="209"/>
        <end position="214"/>
    </location>
</feature>
<feature type="strand" evidence="2">
    <location>
        <begin position="217"/>
        <end position="220"/>
    </location>
</feature>
<feature type="helix" evidence="2">
    <location>
        <begin position="223"/>
        <end position="226"/>
    </location>
</feature>
<feature type="helix" evidence="2">
    <location>
        <begin position="230"/>
        <end position="234"/>
    </location>
</feature>
<feature type="turn" evidence="2">
    <location>
        <begin position="263"/>
        <end position="266"/>
    </location>
</feature>
<feature type="helix" evidence="2">
    <location>
        <begin position="270"/>
        <end position="287"/>
    </location>
</feature>
<feature type="strand" evidence="2">
    <location>
        <begin position="293"/>
        <end position="296"/>
    </location>
</feature>
<feature type="helix" evidence="2">
    <location>
        <begin position="301"/>
        <end position="307"/>
    </location>
</feature>
<feature type="turn" evidence="2">
    <location>
        <begin position="318"/>
        <end position="321"/>
    </location>
</feature>
<feature type="helix" evidence="2">
    <location>
        <begin position="322"/>
        <end position="328"/>
    </location>
</feature>
<feature type="helix" evidence="2">
    <location>
        <begin position="330"/>
        <end position="352"/>
    </location>
</feature>
<feature type="helix" evidence="2">
    <location>
        <begin position="365"/>
        <end position="396"/>
    </location>
</feature>
<feature type="turn" evidence="2">
    <location>
        <begin position="400"/>
        <end position="405"/>
    </location>
</feature>
<feature type="helix" evidence="2">
    <location>
        <begin position="407"/>
        <end position="413"/>
    </location>
</feature>
<feature type="helix" evidence="2">
    <location>
        <begin position="415"/>
        <end position="445"/>
    </location>
</feature>
<feature type="helix" evidence="2">
    <location>
        <begin position="449"/>
        <end position="451"/>
    </location>
</feature>
<feature type="helix" evidence="2">
    <location>
        <begin position="458"/>
        <end position="466"/>
    </location>
</feature>
<feature type="strand" evidence="2">
    <location>
        <begin position="477"/>
        <end position="480"/>
    </location>
</feature>
<feature type="helix" evidence="2">
    <location>
        <begin position="483"/>
        <end position="488"/>
    </location>
</feature>
<feature type="turn" evidence="2">
    <location>
        <begin position="489"/>
        <end position="492"/>
    </location>
</feature>
<feature type="helix" evidence="2">
    <location>
        <begin position="493"/>
        <end position="500"/>
    </location>
</feature>
<feature type="strand" evidence="2">
    <location>
        <begin position="503"/>
        <end position="505"/>
    </location>
</feature>
<feature type="helix" evidence="2">
    <location>
        <begin position="513"/>
        <end position="538"/>
    </location>
</feature>
<feature type="turn" evidence="2">
    <location>
        <begin position="539"/>
        <end position="541"/>
    </location>
</feature>
<feature type="helix" evidence="2">
    <location>
        <begin position="550"/>
        <end position="552"/>
    </location>
</feature>
<feature type="helix" evidence="2">
    <location>
        <begin position="571"/>
        <end position="602"/>
    </location>
</feature>
<feature type="helix" evidence="2">
    <location>
        <begin position="606"/>
        <end position="611"/>
    </location>
</feature>
<feature type="helix" evidence="2">
    <location>
        <begin position="615"/>
        <end position="621"/>
    </location>
</feature>
<feature type="helix" evidence="2">
    <location>
        <begin position="623"/>
        <end position="626"/>
    </location>
</feature>
<feature type="helix" evidence="2">
    <location>
        <begin position="628"/>
        <end position="631"/>
    </location>
</feature>
<feature type="helix" evidence="2">
    <location>
        <begin position="643"/>
        <end position="664"/>
    </location>
</feature>
<feature type="helix" evidence="2">
    <location>
        <begin position="669"/>
        <end position="683"/>
    </location>
</feature>
<feature type="turn" evidence="2">
    <location>
        <begin position="685"/>
        <end position="689"/>
    </location>
</feature>
<feature type="strand" evidence="2">
    <location>
        <begin position="693"/>
        <end position="695"/>
    </location>
</feature>
<feature type="helix" evidence="2">
    <location>
        <begin position="701"/>
        <end position="732"/>
    </location>
</feature>